<proteinExistence type="inferred from homology"/>
<feature type="chain" id="PRO_0000214528" description="Cell division protein ZipA">
    <location>
        <begin position="1"/>
        <end position="323"/>
    </location>
</feature>
<feature type="topological domain" description="Periplasmic" evidence="1">
    <location>
        <begin position="1"/>
        <end position="4"/>
    </location>
</feature>
<feature type="transmembrane region" description="Helical" evidence="1">
    <location>
        <begin position="5"/>
        <end position="25"/>
    </location>
</feature>
<feature type="topological domain" description="Cytoplasmic" evidence="1">
    <location>
        <begin position="26"/>
        <end position="323"/>
    </location>
</feature>
<feature type="region of interest" description="Disordered" evidence="2">
    <location>
        <begin position="44"/>
        <end position="73"/>
    </location>
</feature>
<comment type="function">
    <text evidence="1">Essential cell division protein that stabilizes the FtsZ protofilaments by cross-linking them and that serves as a cytoplasmic membrane anchor for the Z ring. Also required for the recruitment to the septal ring of downstream cell division proteins.</text>
</comment>
<comment type="subunit">
    <text evidence="1">Interacts with FtsZ via their C-terminal domains.</text>
</comment>
<comment type="subcellular location">
    <subcellularLocation>
        <location evidence="1">Cell inner membrane</location>
        <topology evidence="1">Single-pass type I membrane protein</topology>
    </subcellularLocation>
    <text evidence="1">Localizes to the Z ring in an FtsZ-dependent manner.</text>
</comment>
<comment type="similarity">
    <text evidence="1">Belongs to the ZipA family.</text>
</comment>
<organism>
    <name type="scientific">Pasteurella multocida (strain Pm70)</name>
    <dbReference type="NCBI Taxonomy" id="272843"/>
    <lineage>
        <taxon>Bacteria</taxon>
        <taxon>Pseudomonadati</taxon>
        <taxon>Pseudomonadota</taxon>
        <taxon>Gammaproteobacteria</taxon>
        <taxon>Pasteurellales</taxon>
        <taxon>Pasteurellaceae</taxon>
        <taxon>Pasteurella</taxon>
    </lineage>
</organism>
<gene>
    <name evidence="1" type="primary">zipA</name>
    <name type="ordered locus">PM1695</name>
</gene>
<keyword id="KW-0131">Cell cycle</keyword>
<keyword id="KW-0132">Cell division</keyword>
<keyword id="KW-0997">Cell inner membrane</keyword>
<keyword id="KW-1003">Cell membrane</keyword>
<keyword id="KW-0472">Membrane</keyword>
<keyword id="KW-1185">Reference proteome</keyword>
<keyword id="KW-0812">Transmembrane</keyword>
<keyword id="KW-1133">Transmembrane helix</keyword>
<sequence length="323" mass="36259">MDLNTILIILGIIALIILVVHGLWANRREKSQYFKSANTFTRDSRLREPPAHIQSASEEKKDANTSTPTAEVSPAQRTFAFEAEKQFAHEQQAVEQAIENIKITLPKEEQPYQAKIEPDTPPTSPALTTIAEVENYANQEEGIDTHSEQLRQQLADLAQQSPSVTLAALQEEQALMESQAQQQASEDVRQDTDATFIMMYVVAPENYQFQGARLAKILDELGFLFGEHNIYHRHSDLSVNSPVLFSVANIEQPGTFDYNMHDFSTVGIALFMQLPSEGNDLMNLRMMIRAAKSIAEDLGGFVLTDQQAIFDDQAEKAYLDKVR</sequence>
<reference key="1">
    <citation type="journal article" date="2001" name="Proc. Natl. Acad. Sci. U.S.A.">
        <title>Complete genomic sequence of Pasteurella multocida Pm70.</title>
        <authorList>
            <person name="May B.J."/>
            <person name="Zhang Q."/>
            <person name="Li L.L."/>
            <person name="Paustian M.L."/>
            <person name="Whittam T.S."/>
            <person name="Kapur V."/>
        </authorList>
    </citation>
    <scope>NUCLEOTIDE SEQUENCE [LARGE SCALE GENOMIC DNA]</scope>
    <source>
        <strain>Pm70</strain>
    </source>
</reference>
<protein>
    <recommendedName>
        <fullName evidence="1">Cell division protein ZipA</fullName>
    </recommendedName>
</protein>
<accession>Q9CKC8</accession>
<evidence type="ECO:0000255" key="1">
    <source>
        <dbReference type="HAMAP-Rule" id="MF_00509"/>
    </source>
</evidence>
<evidence type="ECO:0000256" key="2">
    <source>
        <dbReference type="SAM" id="MobiDB-lite"/>
    </source>
</evidence>
<name>ZIPA_PASMU</name>
<dbReference type="EMBL" id="AE004439">
    <property type="protein sequence ID" value="AAK03779.1"/>
    <property type="molecule type" value="Genomic_DNA"/>
</dbReference>
<dbReference type="SMR" id="Q9CKC8"/>
<dbReference type="STRING" id="272843.PM1695"/>
<dbReference type="EnsemblBacteria" id="AAK03779">
    <property type="protein sequence ID" value="AAK03779"/>
    <property type="gene ID" value="PM1695"/>
</dbReference>
<dbReference type="KEGG" id="pmu:PM1695"/>
<dbReference type="PATRIC" id="fig|272843.6.peg.1716"/>
<dbReference type="HOGENOM" id="CLU_030174_1_0_6"/>
<dbReference type="OrthoDB" id="7054914at2"/>
<dbReference type="Proteomes" id="UP000000809">
    <property type="component" value="Chromosome"/>
</dbReference>
<dbReference type="GO" id="GO:0032153">
    <property type="term" value="C:cell division site"/>
    <property type="evidence" value="ECO:0007669"/>
    <property type="project" value="UniProtKB-UniRule"/>
</dbReference>
<dbReference type="GO" id="GO:0005886">
    <property type="term" value="C:plasma membrane"/>
    <property type="evidence" value="ECO:0007669"/>
    <property type="project" value="UniProtKB-SubCell"/>
</dbReference>
<dbReference type="GO" id="GO:0000917">
    <property type="term" value="P:division septum assembly"/>
    <property type="evidence" value="ECO:0007669"/>
    <property type="project" value="TreeGrafter"/>
</dbReference>
<dbReference type="GO" id="GO:0043093">
    <property type="term" value="P:FtsZ-dependent cytokinesis"/>
    <property type="evidence" value="ECO:0007669"/>
    <property type="project" value="UniProtKB-UniRule"/>
</dbReference>
<dbReference type="CDD" id="cd00231">
    <property type="entry name" value="ZipA"/>
    <property type="match status" value="1"/>
</dbReference>
<dbReference type="Gene3D" id="3.30.1400.10">
    <property type="entry name" value="ZipA, C-terminal FtsZ-binding domain"/>
    <property type="match status" value="1"/>
</dbReference>
<dbReference type="HAMAP" id="MF_00509">
    <property type="entry name" value="ZipA"/>
    <property type="match status" value="1"/>
</dbReference>
<dbReference type="InterPro" id="IPR011919">
    <property type="entry name" value="Cell_div_ZipA"/>
</dbReference>
<dbReference type="InterPro" id="IPR007449">
    <property type="entry name" value="ZipA_FtsZ-bd_C"/>
</dbReference>
<dbReference type="InterPro" id="IPR036765">
    <property type="entry name" value="ZipA_FtsZ-bd_C_sf"/>
</dbReference>
<dbReference type="NCBIfam" id="TIGR02205">
    <property type="entry name" value="septum_zipA"/>
    <property type="match status" value="1"/>
</dbReference>
<dbReference type="PANTHER" id="PTHR38685">
    <property type="entry name" value="CELL DIVISION PROTEIN ZIPA"/>
    <property type="match status" value="1"/>
</dbReference>
<dbReference type="PANTHER" id="PTHR38685:SF1">
    <property type="entry name" value="CELL DIVISION PROTEIN ZIPA"/>
    <property type="match status" value="1"/>
</dbReference>
<dbReference type="Pfam" id="PF04354">
    <property type="entry name" value="ZipA_C"/>
    <property type="match status" value="1"/>
</dbReference>
<dbReference type="SMART" id="SM00771">
    <property type="entry name" value="ZipA_C"/>
    <property type="match status" value="1"/>
</dbReference>
<dbReference type="SUPFAM" id="SSF64383">
    <property type="entry name" value="Cell-division protein ZipA, C-terminal domain"/>
    <property type="match status" value="1"/>
</dbReference>